<dbReference type="EC" id="4.1.2.4" evidence="1"/>
<dbReference type="EMBL" id="AE017262">
    <property type="protein sequence ID" value="AAT04788.1"/>
    <property type="molecule type" value="Genomic_DNA"/>
</dbReference>
<dbReference type="RefSeq" id="WP_010958978.1">
    <property type="nucleotide sequence ID" value="NC_002973.6"/>
</dbReference>
<dbReference type="SMR" id="Q71Y27"/>
<dbReference type="KEGG" id="lmf:LMOf2365_2018"/>
<dbReference type="HOGENOM" id="CLU_053595_0_2_9"/>
<dbReference type="UniPathway" id="UPA00002">
    <property type="reaction ID" value="UER00468"/>
</dbReference>
<dbReference type="GO" id="GO:0005737">
    <property type="term" value="C:cytoplasm"/>
    <property type="evidence" value="ECO:0007669"/>
    <property type="project" value="UniProtKB-SubCell"/>
</dbReference>
<dbReference type="GO" id="GO:0004139">
    <property type="term" value="F:deoxyribose-phosphate aldolase activity"/>
    <property type="evidence" value="ECO:0007669"/>
    <property type="project" value="UniProtKB-UniRule"/>
</dbReference>
<dbReference type="GO" id="GO:0006018">
    <property type="term" value="P:2-deoxyribose 1-phosphate catabolic process"/>
    <property type="evidence" value="ECO:0007669"/>
    <property type="project" value="UniProtKB-UniRule"/>
</dbReference>
<dbReference type="GO" id="GO:0016052">
    <property type="term" value="P:carbohydrate catabolic process"/>
    <property type="evidence" value="ECO:0007669"/>
    <property type="project" value="TreeGrafter"/>
</dbReference>
<dbReference type="GO" id="GO:0009264">
    <property type="term" value="P:deoxyribonucleotide catabolic process"/>
    <property type="evidence" value="ECO:0007669"/>
    <property type="project" value="InterPro"/>
</dbReference>
<dbReference type="CDD" id="cd00959">
    <property type="entry name" value="DeoC"/>
    <property type="match status" value="1"/>
</dbReference>
<dbReference type="FunFam" id="3.20.20.70:FF:000044">
    <property type="entry name" value="Deoxyribose-phosphate aldolase"/>
    <property type="match status" value="1"/>
</dbReference>
<dbReference type="Gene3D" id="3.20.20.70">
    <property type="entry name" value="Aldolase class I"/>
    <property type="match status" value="1"/>
</dbReference>
<dbReference type="HAMAP" id="MF_00114">
    <property type="entry name" value="DeoC_type1"/>
    <property type="match status" value="1"/>
</dbReference>
<dbReference type="InterPro" id="IPR013785">
    <property type="entry name" value="Aldolase_TIM"/>
</dbReference>
<dbReference type="InterPro" id="IPR011343">
    <property type="entry name" value="DeoC"/>
</dbReference>
<dbReference type="InterPro" id="IPR002915">
    <property type="entry name" value="DeoC/FbaB/LacD_aldolase"/>
</dbReference>
<dbReference type="InterPro" id="IPR028581">
    <property type="entry name" value="DeoC_typeI"/>
</dbReference>
<dbReference type="NCBIfam" id="TIGR00126">
    <property type="entry name" value="deoC"/>
    <property type="match status" value="1"/>
</dbReference>
<dbReference type="PANTHER" id="PTHR10889">
    <property type="entry name" value="DEOXYRIBOSE-PHOSPHATE ALDOLASE"/>
    <property type="match status" value="1"/>
</dbReference>
<dbReference type="PANTHER" id="PTHR10889:SF1">
    <property type="entry name" value="DEOXYRIBOSE-PHOSPHATE ALDOLASE"/>
    <property type="match status" value="1"/>
</dbReference>
<dbReference type="Pfam" id="PF01791">
    <property type="entry name" value="DeoC"/>
    <property type="match status" value="1"/>
</dbReference>
<dbReference type="PIRSF" id="PIRSF001357">
    <property type="entry name" value="DeoC"/>
    <property type="match status" value="1"/>
</dbReference>
<dbReference type="SMART" id="SM01133">
    <property type="entry name" value="DeoC"/>
    <property type="match status" value="1"/>
</dbReference>
<dbReference type="SUPFAM" id="SSF51569">
    <property type="entry name" value="Aldolase"/>
    <property type="match status" value="1"/>
</dbReference>
<comment type="function">
    <text evidence="1">Catalyzes a reversible aldol reaction between acetaldehyde and D-glyceraldehyde 3-phosphate to generate 2-deoxy-D-ribose 5-phosphate.</text>
</comment>
<comment type="catalytic activity">
    <reaction evidence="1">
        <text>2-deoxy-D-ribose 5-phosphate = D-glyceraldehyde 3-phosphate + acetaldehyde</text>
        <dbReference type="Rhea" id="RHEA:12821"/>
        <dbReference type="ChEBI" id="CHEBI:15343"/>
        <dbReference type="ChEBI" id="CHEBI:59776"/>
        <dbReference type="ChEBI" id="CHEBI:62877"/>
        <dbReference type="EC" id="4.1.2.4"/>
    </reaction>
</comment>
<comment type="pathway">
    <text evidence="1">Carbohydrate degradation; 2-deoxy-D-ribose 1-phosphate degradation; D-glyceraldehyde 3-phosphate and acetaldehyde from 2-deoxy-alpha-D-ribose 1-phosphate: step 2/2.</text>
</comment>
<comment type="subcellular location">
    <subcellularLocation>
        <location evidence="1">Cytoplasm</location>
    </subcellularLocation>
</comment>
<comment type="similarity">
    <text evidence="1">Belongs to the DeoC/FbaB aldolase family. DeoC type 1 subfamily.</text>
</comment>
<organism>
    <name type="scientific">Listeria monocytogenes serotype 4b (strain F2365)</name>
    <dbReference type="NCBI Taxonomy" id="265669"/>
    <lineage>
        <taxon>Bacteria</taxon>
        <taxon>Bacillati</taxon>
        <taxon>Bacillota</taxon>
        <taxon>Bacilli</taxon>
        <taxon>Bacillales</taxon>
        <taxon>Listeriaceae</taxon>
        <taxon>Listeria</taxon>
    </lineage>
</organism>
<name>DEOC_LISMF</name>
<gene>
    <name evidence="1" type="primary">deoC</name>
    <name type="ordered locus">LMOf2365_2018</name>
</gene>
<feature type="chain" id="PRO_0000057238" description="Deoxyribose-phosphate aldolase">
    <location>
        <begin position="1"/>
        <end position="223"/>
    </location>
</feature>
<feature type="active site" description="Proton donor/acceptor" evidence="1">
    <location>
        <position position="89"/>
    </location>
</feature>
<feature type="active site" description="Schiff-base intermediate with acetaldehyde" evidence="1">
    <location>
        <position position="152"/>
    </location>
</feature>
<feature type="active site" description="Proton donor/acceptor" evidence="1">
    <location>
        <position position="181"/>
    </location>
</feature>
<accession>Q71Y27</accession>
<protein>
    <recommendedName>
        <fullName evidence="1">Deoxyribose-phosphate aldolase</fullName>
        <shortName evidence="1">DERA</shortName>
        <ecNumber evidence="1">4.1.2.4</ecNumber>
    </recommendedName>
    <alternativeName>
        <fullName evidence="1">2-deoxy-D-ribose 5-phosphate aldolase</fullName>
    </alternativeName>
    <alternativeName>
        <fullName evidence="1">Phosphodeoxyriboaldolase</fullName>
        <shortName evidence="1">Deoxyriboaldolase</shortName>
    </alternativeName>
</protein>
<proteinExistence type="inferred from homology"/>
<reference key="1">
    <citation type="journal article" date="2004" name="Nucleic Acids Res.">
        <title>Whole genome comparisons of serotype 4b and 1/2a strains of the food-borne pathogen Listeria monocytogenes reveal new insights into the core genome components of this species.</title>
        <authorList>
            <person name="Nelson K.E."/>
            <person name="Fouts D.E."/>
            <person name="Mongodin E.F."/>
            <person name="Ravel J."/>
            <person name="DeBoy R.T."/>
            <person name="Kolonay J.F."/>
            <person name="Rasko D.A."/>
            <person name="Angiuoli S.V."/>
            <person name="Gill S.R."/>
            <person name="Paulsen I.T."/>
            <person name="Peterson J.D."/>
            <person name="White O."/>
            <person name="Nelson W.C."/>
            <person name="Nierman W.C."/>
            <person name="Beanan M.J."/>
            <person name="Brinkac L.M."/>
            <person name="Daugherty S.C."/>
            <person name="Dodson R.J."/>
            <person name="Durkin A.S."/>
            <person name="Madupu R."/>
            <person name="Haft D.H."/>
            <person name="Selengut J."/>
            <person name="Van Aken S.E."/>
            <person name="Khouri H.M."/>
            <person name="Fedorova N."/>
            <person name="Forberger H.A."/>
            <person name="Tran B."/>
            <person name="Kathariou S."/>
            <person name="Wonderling L.D."/>
            <person name="Uhlich G.A."/>
            <person name="Bayles D.O."/>
            <person name="Luchansky J.B."/>
            <person name="Fraser C.M."/>
        </authorList>
    </citation>
    <scope>NUCLEOTIDE SEQUENCE [LARGE SCALE GENOMIC DNA]</scope>
    <source>
        <strain>F2365</strain>
    </source>
</reference>
<evidence type="ECO:0000255" key="1">
    <source>
        <dbReference type="HAMAP-Rule" id="MF_00114"/>
    </source>
</evidence>
<keyword id="KW-0963">Cytoplasm</keyword>
<keyword id="KW-0456">Lyase</keyword>
<keyword id="KW-0704">Schiff base</keyword>
<sequence>MTIAKMIDHTALKPDTTKEQILTLTKEAREYGFASVCVNPTWVKLSAEQLAGAESVVCTVIGFPLGANTPEVKAFEVKDAIQNGAKEVDMVINIGALKDKDDELVERDIRAVVYAAKGKALVKVIIETCLLTDEEKVRACEIAVKAGTDFVKTSTGFSTGGATAEDIALMRKTVGPNIGVKASGGVRTKEDVEKMIEAGATRIGASAGVAIVSGEKPAKPDNY</sequence>